<name>SYH_BORA1</name>
<keyword id="KW-0030">Aminoacyl-tRNA synthetase</keyword>
<keyword id="KW-0067">ATP-binding</keyword>
<keyword id="KW-0963">Cytoplasm</keyword>
<keyword id="KW-0436">Ligase</keyword>
<keyword id="KW-0547">Nucleotide-binding</keyword>
<keyword id="KW-0648">Protein biosynthesis</keyword>
<keyword id="KW-1185">Reference proteome</keyword>
<accession>Q2KY92</accession>
<gene>
    <name evidence="1" type="primary">hisS</name>
    <name type="ordered locus">BAV2343</name>
</gene>
<evidence type="ECO:0000255" key="1">
    <source>
        <dbReference type="HAMAP-Rule" id="MF_00127"/>
    </source>
</evidence>
<dbReference type="EC" id="6.1.1.21" evidence="1"/>
<dbReference type="EMBL" id="AM167904">
    <property type="protein sequence ID" value="CAJ49953.1"/>
    <property type="molecule type" value="Genomic_DNA"/>
</dbReference>
<dbReference type="RefSeq" id="WP_012418004.1">
    <property type="nucleotide sequence ID" value="NC_010645.1"/>
</dbReference>
<dbReference type="SMR" id="Q2KY92"/>
<dbReference type="STRING" id="360910.BAV2343"/>
<dbReference type="GeneID" id="92934480"/>
<dbReference type="KEGG" id="bav:BAV2343"/>
<dbReference type="eggNOG" id="COG0124">
    <property type="taxonomic scope" value="Bacteria"/>
</dbReference>
<dbReference type="HOGENOM" id="CLU_025113_1_1_4"/>
<dbReference type="OrthoDB" id="9800814at2"/>
<dbReference type="Proteomes" id="UP000001977">
    <property type="component" value="Chromosome"/>
</dbReference>
<dbReference type="GO" id="GO:0005737">
    <property type="term" value="C:cytoplasm"/>
    <property type="evidence" value="ECO:0007669"/>
    <property type="project" value="UniProtKB-SubCell"/>
</dbReference>
<dbReference type="GO" id="GO:0005524">
    <property type="term" value="F:ATP binding"/>
    <property type="evidence" value="ECO:0007669"/>
    <property type="project" value="UniProtKB-UniRule"/>
</dbReference>
<dbReference type="GO" id="GO:0004821">
    <property type="term" value="F:histidine-tRNA ligase activity"/>
    <property type="evidence" value="ECO:0007669"/>
    <property type="project" value="UniProtKB-UniRule"/>
</dbReference>
<dbReference type="GO" id="GO:0006427">
    <property type="term" value="P:histidyl-tRNA aminoacylation"/>
    <property type="evidence" value="ECO:0007669"/>
    <property type="project" value="UniProtKB-UniRule"/>
</dbReference>
<dbReference type="CDD" id="cd00773">
    <property type="entry name" value="HisRS-like_core"/>
    <property type="match status" value="1"/>
</dbReference>
<dbReference type="CDD" id="cd00859">
    <property type="entry name" value="HisRS_anticodon"/>
    <property type="match status" value="1"/>
</dbReference>
<dbReference type="FunFam" id="3.30.930.10:FF:000005">
    <property type="entry name" value="Histidine--tRNA ligase"/>
    <property type="match status" value="1"/>
</dbReference>
<dbReference type="Gene3D" id="3.40.50.800">
    <property type="entry name" value="Anticodon-binding domain"/>
    <property type="match status" value="1"/>
</dbReference>
<dbReference type="Gene3D" id="3.30.930.10">
    <property type="entry name" value="Bira Bifunctional Protein, Domain 2"/>
    <property type="match status" value="1"/>
</dbReference>
<dbReference type="HAMAP" id="MF_00127">
    <property type="entry name" value="His_tRNA_synth"/>
    <property type="match status" value="1"/>
</dbReference>
<dbReference type="InterPro" id="IPR006195">
    <property type="entry name" value="aa-tRNA-synth_II"/>
</dbReference>
<dbReference type="InterPro" id="IPR045864">
    <property type="entry name" value="aa-tRNA-synth_II/BPL/LPL"/>
</dbReference>
<dbReference type="InterPro" id="IPR004154">
    <property type="entry name" value="Anticodon-bd"/>
</dbReference>
<dbReference type="InterPro" id="IPR036621">
    <property type="entry name" value="Anticodon-bd_dom_sf"/>
</dbReference>
<dbReference type="InterPro" id="IPR015807">
    <property type="entry name" value="His-tRNA-ligase"/>
</dbReference>
<dbReference type="InterPro" id="IPR041715">
    <property type="entry name" value="HisRS-like_core"/>
</dbReference>
<dbReference type="InterPro" id="IPR004516">
    <property type="entry name" value="HisRS/HisZ"/>
</dbReference>
<dbReference type="InterPro" id="IPR033656">
    <property type="entry name" value="HisRS_anticodon"/>
</dbReference>
<dbReference type="NCBIfam" id="TIGR00442">
    <property type="entry name" value="hisS"/>
    <property type="match status" value="1"/>
</dbReference>
<dbReference type="PANTHER" id="PTHR43707:SF1">
    <property type="entry name" value="HISTIDINE--TRNA LIGASE, MITOCHONDRIAL-RELATED"/>
    <property type="match status" value="1"/>
</dbReference>
<dbReference type="PANTHER" id="PTHR43707">
    <property type="entry name" value="HISTIDYL-TRNA SYNTHETASE"/>
    <property type="match status" value="1"/>
</dbReference>
<dbReference type="Pfam" id="PF03129">
    <property type="entry name" value="HGTP_anticodon"/>
    <property type="match status" value="1"/>
</dbReference>
<dbReference type="Pfam" id="PF13393">
    <property type="entry name" value="tRNA-synt_His"/>
    <property type="match status" value="1"/>
</dbReference>
<dbReference type="PIRSF" id="PIRSF001549">
    <property type="entry name" value="His-tRNA_synth"/>
    <property type="match status" value="1"/>
</dbReference>
<dbReference type="SUPFAM" id="SSF52954">
    <property type="entry name" value="Class II aaRS ABD-related"/>
    <property type="match status" value="1"/>
</dbReference>
<dbReference type="SUPFAM" id="SSF55681">
    <property type="entry name" value="Class II aaRS and biotin synthetases"/>
    <property type="match status" value="1"/>
</dbReference>
<dbReference type="PROSITE" id="PS50862">
    <property type="entry name" value="AA_TRNA_LIGASE_II"/>
    <property type="match status" value="1"/>
</dbReference>
<comment type="catalytic activity">
    <reaction evidence="1">
        <text>tRNA(His) + L-histidine + ATP = L-histidyl-tRNA(His) + AMP + diphosphate + H(+)</text>
        <dbReference type="Rhea" id="RHEA:17313"/>
        <dbReference type="Rhea" id="RHEA-COMP:9665"/>
        <dbReference type="Rhea" id="RHEA-COMP:9689"/>
        <dbReference type="ChEBI" id="CHEBI:15378"/>
        <dbReference type="ChEBI" id="CHEBI:30616"/>
        <dbReference type="ChEBI" id="CHEBI:33019"/>
        <dbReference type="ChEBI" id="CHEBI:57595"/>
        <dbReference type="ChEBI" id="CHEBI:78442"/>
        <dbReference type="ChEBI" id="CHEBI:78527"/>
        <dbReference type="ChEBI" id="CHEBI:456215"/>
        <dbReference type="EC" id="6.1.1.21"/>
    </reaction>
</comment>
<comment type="subunit">
    <text evidence="1">Homodimer.</text>
</comment>
<comment type="subcellular location">
    <subcellularLocation>
        <location evidence="1">Cytoplasm</location>
    </subcellularLocation>
</comment>
<comment type="similarity">
    <text evidence="1">Belongs to the class-II aminoacyl-tRNA synthetase family.</text>
</comment>
<proteinExistence type="inferred from homology"/>
<organism>
    <name type="scientific">Bordetella avium (strain 197N)</name>
    <dbReference type="NCBI Taxonomy" id="360910"/>
    <lineage>
        <taxon>Bacteria</taxon>
        <taxon>Pseudomonadati</taxon>
        <taxon>Pseudomonadota</taxon>
        <taxon>Betaproteobacteria</taxon>
        <taxon>Burkholderiales</taxon>
        <taxon>Alcaligenaceae</taxon>
        <taxon>Bordetella</taxon>
    </lineage>
</organism>
<reference key="1">
    <citation type="journal article" date="2006" name="J. Bacteriol.">
        <title>Comparison of the genome sequence of the poultry pathogen Bordetella avium with those of B. bronchiseptica, B. pertussis, and B. parapertussis reveals extensive diversity in surface structures associated with host interaction.</title>
        <authorList>
            <person name="Sebaihia M."/>
            <person name="Preston A."/>
            <person name="Maskell D.J."/>
            <person name="Kuzmiak H."/>
            <person name="Connell T.D."/>
            <person name="King N.D."/>
            <person name="Orndorff P.E."/>
            <person name="Miyamoto D.M."/>
            <person name="Thomson N.R."/>
            <person name="Harris D."/>
            <person name="Goble A."/>
            <person name="Lord A."/>
            <person name="Murphy L."/>
            <person name="Quail M.A."/>
            <person name="Rutter S."/>
            <person name="Squares R."/>
            <person name="Squares S."/>
            <person name="Woodward J."/>
            <person name="Parkhill J."/>
            <person name="Temple L.M."/>
        </authorList>
    </citation>
    <scope>NUCLEOTIDE SEQUENCE [LARGE SCALE GENOMIC DNA]</scope>
    <source>
        <strain>197N</strain>
    </source>
</reference>
<protein>
    <recommendedName>
        <fullName evidence="1">Histidine--tRNA ligase</fullName>
        <ecNumber evidence="1">6.1.1.21</ecNumber>
    </recommendedName>
    <alternativeName>
        <fullName evidence="1">Histidyl-tRNA synthetase</fullName>
        <shortName evidence="1">HisRS</shortName>
    </alternativeName>
</protein>
<feature type="chain" id="PRO_1000016315" description="Histidine--tRNA ligase">
    <location>
        <begin position="1"/>
        <end position="428"/>
    </location>
</feature>
<sequence>MTQAFQKVSAIRGMNDVLPGPSAQWERFEEIVRAWLQGYGYRNVRTPILEQTRLFTRGIGEVTDIVEKEMYTFTDALNGESLTMRPEMTAGVVRAAIEHNMLYERPHRVYSIGPVFRHERPQRGRYRQFHQIDVEALGFAGPDIDAELIVMLGRLWNTLGLADIRLELNSLGQPAERAAHRAALIEYLEKHVDILDEDGKRRLYTNPLRVLDTKNPALQEMANAAPRLFDFLGEASRAHFDGVCQRLDDAGIGYSLNPRLVRGLDYYNLTVFEWVTDRLGSQGTVCGGGRYDGLIELLGGKPAPAVGFAIGVERLLDLWEQSAGQQTPPECEVYVVHQGEGAQRLAARVGEDLRDAGLSVIVHAGAASFKSQFKRADASGARVAVILGDDEVATKTASVKYLRADAAGEGAQDKVALATLASVLKSKG</sequence>